<sequence>MRLRVLWVGKSREEWVKQALADYATRIRRYAPLELVEVRDEKGAMAEEMRRRECERLEKQIPPGATLLLLDERGEQMDSPGLAAYIGKQRDSGTADLVLVIGGAYGFSDAFRRRGRLLSLSPMTFTHQMVRVFLLEQLYRSFTILNNEPYHH</sequence>
<dbReference type="EC" id="2.1.1.177" evidence="1"/>
<dbReference type="EMBL" id="CP000482">
    <property type="protein sequence ID" value="ABL01204.1"/>
    <property type="molecule type" value="Genomic_DNA"/>
</dbReference>
<dbReference type="RefSeq" id="WP_011737416.1">
    <property type="nucleotide sequence ID" value="NC_008609.1"/>
</dbReference>
<dbReference type="SMR" id="A1AV33"/>
<dbReference type="STRING" id="338966.Ppro_3612"/>
<dbReference type="KEGG" id="ppd:Ppro_3612"/>
<dbReference type="eggNOG" id="COG1576">
    <property type="taxonomic scope" value="Bacteria"/>
</dbReference>
<dbReference type="HOGENOM" id="CLU_100552_2_0_7"/>
<dbReference type="OrthoDB" id="9806643at2"/>
<dbReference type="Proteomes" id="UP000006732">
    <property type="component" value="Chromosome"/>
</dbReference>
<dbReference type="GO" id="GO:0005737">
    <property type="term" value="C:cytoplasm"/>
    <property type="evidence" value="ECO:0007669"/>
    <property type="project" value="UniProtKB-SubCell"/>
</dbReference>
<dbReference type="GO" id="GO:0070038">
    <property type="term" value="F:rRNA (pseudouridine-N3-)-methyltransferase activity"/>
    <property type="evidence" value="ECO:0007669"/>
    <property type="project" value="UniProtKB-UniRule"/>
</dbReference>
<dbReference type="CDD" id="cd18081">
    <property type="entry name" value="RlmH-like"/>
    <property type="match status" value="1"/>
</dbReference>
<dbReference type="Gene3D" id="3.40.1280.10">
    <property type="match status" value="1"/>
</dbReference>
<dbReference type="HAMAP" id="MF_00658">
    <property type="entry name" value="23SrRNA_methyltr_H"/>
    <property type="match status" value="1"/>
</dbReference>
<dbReference type="InterPro" id="IPR029028">
    <property type="entry name" value="Alpha/beta_knot_MTases"/>
</dbReference>
<dbReference type="InterPro" id="IPR003742">
    <property type="entry name" value="RlmH-like"/>
</dbReference>
<dbReference type="InterPro" id="IPR029026">
    <property type="entry name" value="tRNA_m1G_MTases_N"/>
</dbReference>
<dbReference type="PANTHER" id="PTHR33603">
    <property type="entry name" value="METHYLTRANSFERASE"/>
    <property type="match status" value="1"/>
</dbReference>
<dbReference type="PANTHER" id="PTHR33603:SF1">
    <property type="entry name" value="RIBOSOMAL RNA LARGE SUBUNIT METHYLTRANSFERASE H"/>
    <property type="match status" value="1"/>
</dbReference>
<dbReference type="Pfam" id="PF02590">
    <property type="entry name" value="SPOUT_MTase"/>
    <property type="match status" value="1"/>
</dbReference>
<dbReference type="PIRSF" id="PIRSF004505">
    <property type="entry name" value="MT_bac"/>
    <property type="match status" value="1"/>
</dbReference>
<dbReference type="SUPFAM" id="SSF75217">
    <property type="entry name" value="alpha/beta knot"/>
    <property type="match status" value="1"/>
</dbReference>
<accession>A1AV33</accession>
<keyword id="KW-0963">Cytoplasm</keyword>
<keyword id="KW-0489">Methyltransferase</keyword>
<keyword id="KW-1185">Reference proteome</keyword>
<keyword id="KW-0698">rRNA processing</keyword>
<keyword id="KW-0949">S-adenosyl-L-methionine</keyword>
<keyword id="KW-0808">Transferase</keyword>
<protein>
    <recommendedName>
        <fullName evidence="1">Ribosomal RNA large subunit methyltransferase H</fullName>
        <ecNumber evidence="1">2.1.1.177</ecNumber>
    </recommendedName>
    <alternativeName>
        <fullName evidence="1">23S rRNA (pseudouridine1915-N3)-methyltransferase</fullName>
    </alternativeName>
    <alternativeName>
        <fullName evidence="1">23S rRNA m3Psi1915 methyltransferase</fullName>
    </alternativeName>
    <alternativeName>
        <fullName evidence="1">rRNA (pseudouridine-N3-)-methyltransferase RlmH</fullName>
    </alternativeName>
</protein>
<proteinExistence type="inferred from homology"/>
<evidence type="ECO:0000255" key="1">
    <source>
        <dbReference type="HAMAP-Rule" id="MF_00658"/>
    </source>
</evidence>
<name>RLMH_PELPD</name>
<gene>
    <name evidence="1" type="primary">rlmH</name>
    <name type="ordered locus">Ppro_3612</name>
</gene>
<feature type="chain" id="PRO_1000061818" description="Ribosomal RNA large subunit methyltransferase H">
    <location>
        <begin position="1"/>
        <end position="152"/>
    </location>
</feature>
<feature type="binding site" evidence="1">
    <location>
        <position position="70"/>
    </location>
    <ligand>
        <name>S-adenosyl-L-methionine</name>
        <dbReference type="ChEBI" id="CHEBI:59789"/>
    </ligand>
</feature>
<feature type="binding site" evidence="1">
    <location>
        <position position="102"/>
    </location>
    <ligand>
        <name>S-adenosyl-L-methionine</name>
        <dbReference type="ChEBI" id="CHEBI:59789"/>
    </ligand>
</feature>
<feature type="binding site" evidence="1">
    <location>
        <begin position="120"/>
        <end position="125"/>
    </location>
    <ligand>
        <name>S-adenosyl-L-methionine</name>
        <dbReference type="ChEBI" id="CHEBI:59789"/>
    </ligand>
</feature>
<reference key="1">
    <citation type="submission" date="2006-10" db="EMBL/GenBank/DDBJ databases">
        <title>Complete sequence of chromosome of Pelobacter propionicus DSM 2379.</title>
        <authorList>
            <consortium name="US DOE Joint Genome Institute"/>
            <person name="Copeland A."/>
            <person name="Lucas S."/>
            <person name="Lapidus A."/>
            <person name="Barry K."/>
            <person name="Detter J.C."/>
            <person name="Glavina del Rio T."/>
            <person name="Hammon N."/>
            <person name="Israni S."/>
            <person name="Dalin E."/>
            <person name="Tice H."/>
            <person name="Pitluck S."/>
            <person name="Saunders E."/>
            <person name="Brettin T."/>
            <person name="Bruce D."/>
            <person name="Han C."/>
            <person name="Tapia R."/>
            <person name="Schmutz J."/>
            <person name="Larimer F."/>
            <person name="Land M."/>
            <person name="Hauser L."/>
            <person name="Kyrpides N."/>
            <person name="Kim E."/>
            <person name="Lovley D."/>
            <person name="Richardson P."/>
        </authorList>
    </citation>
    <scope>NUCLEOTIDE SEQUENCE [LARGE SCALE GENOMIC DNA]</scope>
    <source>
        <strain>DSM 2379 / NBRC 103807 / OttBd1</strain>
    </source>
</reference>
<comment type="function">
    <text evidence="1">Specifically methylates the pseudouridine at position 1915 (m3Psi1915) in 23S rRNA.</text>
</comment>
<comment type="catalytic activity">
    <reaction evidence="1">
        <text>pseudouridine(1915) in 23S rRNA + S-adenosyl-L-methionine = N(3)-methylpseudouridine(1915) in 23S rRNA + S-adenosyl-L-homocysteine + H(+)</text>
        <dbReference type="Rhea" id="RHEA:42752"/>
        <dbReference type="Rhea" id="RHEA-COMP:10221"/>
        <dbReference type="Rhea" id="RHEA-COMP:10222"/>
        <dbReference type="ChEBI" id="CHEBI:15378"/>
        <dbReference type="ChEBI" id="CHEBI:57856"/>
        <dbReference type="ChEBI" id="CHEBI:59789"/>
        <dbReference type="ChEBI" id="CHEBI:65314"/>
        <dbReference type="ChEBI" id="CHEBI:74486"/>
        <dbReference type="EC" id="2.1.1.177"/>
    </reaction>
</comment>
<comment type="subunit">
    <text evidence="1">Homodimer.</text>
</comment>
<comment type="subcellular location">
    <subcellularLocation>
        <location evidence="1">Cytoplasm</location>
    </subcellularLocation>
</comment>
<comment type="similarity">
    <text evidence="1">Belongs to the RNA methyltransferase RlmH family.</text>
</comment>
<organism>
    <name type="scientific">Pelobacter propionicus (strain DSM 2379 / NBRC 103807 / OttBd1)</name>
    <dbReference type="NCBI Taxonomy" id="338966"/>
    <lineage>
        <taxon>Bacteria</taxon>
        <taxon>Pseudomonadati</taxon>
        <taxon>Thermodesulfobacteriota</taxon>
        <taxon>Desulfuromonadia</taxon>
        <taxon>Desulfuromonadales</taxon>
        <taxon>Desulfuromonadaceae</taxon>
        <taxon>Pelobacter</taxon>
    </lineage>
</organism>